<feature type="chain" id="PRO_1000124252" description="Inner membrane-spanning protein YciB">
    <location>
        <begin position="1"/>
        <end position="186"/>
    </location>
</feature>
<feature type="transmembrane region" description="Helical" evidence="1">
    <location>
        <begin position="10"/>
        <end position="30"/>
    </location>
</feature>
<feature type="transmembrane region" description="Helical" evidence="1">
    <location>
        <begin position="47"/>
        <end position="67"/>
    </location>
</feature>
<feature type="transmembrane region" description="Helical" evidence="1">
    <location>
        <begin position="76"/>
        <end position="96"/>
    </location>
</feature>
<feature type="transmembrane region" description="Helical" evidence="1">
    <location>
        <begin position="121"/>
        <end position="141"/>
    </location>
</feature>
<feature type="transmembrane region" description="Helical" evidence="1">
    <location>
        <begin position="149"/>
        <end position="169"/>
    </location>
</feature>
<accession>B9MAB3</accession>
<proteinExistence type="inferred from homology"/>
<sequence length="186" mass="20942">MKLLIDFFPIILFFAAFKVWGIYVATAVAIAATVVQIGYIRLKHGKVEPLQWLSLGVIVLFGGATLLAHSETFIKWKPTVLYWLMGGTLLVGQLMFRKNFIQSLMGAQIDLPAPVWRNLNWGWTGFFATMGVLNLWVAYHFDTDTWVNFKLFGGIGLMFAFVIAQALYLSRHVKDEGDAAPKDLQP</sequence>
<comment type="function">
    <text evidence="1">Plays a role in cell envelope biogenesis, maintenance of cell envelope integrity and membrane homeostasis.</text>
</comment>
<comment type="subcellular location">
    <subcellularLocation>
        <location evidence="1">Cell inner membrane</location>
        <topology evidence="1">Multi-pass membrane protein</topology>
    </subcellularLocation>
</comment>
<comment type="similarity">
    <text evidence="1">Belongs to the YciB family.</text>
</comment>
<organism>
    <name type="scientific">Acidovorax ebreus (strain TPSY)</name>
    <name type="common">Diaphorobacter sp. (strain TPSY)</name>
    <dbReference type="NCBI Taxonomy" id="535289"/>
    <lineage>
        <taxon>Bacteria</taxon>
        <taxon>Pseudomonadati</taxon>
        <taxon>Pseudomonadota</taxon>
        <taxon>Betaproteobacteria</taxon>
        <taxon>Burkholderiales</taxon>
        <taxon>Comamonadaceae</taxon>
        <taxon>Diaphorobacter</taxon>
    </lineage>
</organism>
<reference key="1">
    <citation type="submission" date="2009-01" db="EMBL/GenBank/DDBJ databases">
        <title>Complete sequence of Diaphorobacter sp. TPSY.</title>
        <authorList>
            <consortium name="US DOE Joint Genome Institute"/>
            <person name="Lucas S."/>
            <person name="Copeland A."/>
            <person name="Lapidus A."/>
            <person name="Glavina del Rio T."/>
            <person name="Tice H."/>
            <person name="Bruce D."/>
            <person name="Goodwin L."/>
            <person name="Pitluck S."/>
            <person name="Chertkov O."/>
            <person name="Brettin T."/>
            <person name="Detter J.C."/>
            <person name="Han C."/>
            <person name="Larimer F."/>
            <person name="Land M."/>
            <person name="Hauser L."/>
            <person name="Kyrpides N."/>
            <person name="Mikhailova N."/>
            <person name="Coates J.D."/>
        </authorList>
    </citation>
    <scope>NUCLEOTIDE SEQUENCE [LARGE SCALE GENOMIC DNA]</scope>
    <source>
        <strain>TPSY</strain>
    </source>
</reference>
<name>YCIB_ACIET</name>
<gene>
    <name evidence="1" type="primary">yciB</name>
    <name type="ordered locus">Dtpsy_2029</name>
</gene>
<keyword id="KW-0997">Cell inner membrane</keyword>
<keyword id="KW-1003">Cell membrane</keyword>
<keyword id="KW-0472">Membrane</keyword>
<keyword id="KW-1185">Reference proteome</keyword>
<keyword id="KW-0812">Transmembrane</keyword>
<keyword id="KW-1133">Transmembrane helix</keyword>
<dbReference type="EMBL" id="CP001392">
    <property type="protein sequence ID" value="ACM33485.1"/>
    <property type="molecule type" value="Genomic_DNA"/>
</dbReference>
<dbReference type="RefSeq" id="WP_015913519.1">
    <property type="nucleotide sequence ID" value="NC_011992.1"/>
</dbReference>
<dbReference type="KEGG" id="dia:Dtpsy_2029"/>
<dbReference type="eggNOG" id="COG2917">
    <property type="taxonomic scope" value="Bacteria"/>
</dbReference>
<dbReference type="HOGENOM" id="CLU_089554_2_0_4"/>
<dbReference type="Proteomes" id="UP000000450">
    <property type="component" value="Chromosome"/>
</dbReference>
<dbReference type="GO" id="GO:0005886">
    <property type="term" value="C:plasma membrane"/>
    <property type="evidence" value="ECO:0007669"/>
    <property type="project" value="UniProtKB-SubCell"/>
</dbReference>
<dbReference type="HAMAP" id="MF_00189">
    <property type="entry name" value="YciB"/>
    <property type="match status" value="1"/>
</dbReference>
<dbReference type="InterPro" id="IPR006008">
    <property type="entry name" value="YciB"/>
</dbReference>
<dbReference type="NCBIfam" id="TIGR00997">
    <property type="entry name" value="ispZ"/>
    <property type="match status" value="1"/>
</dbReference>
<dbReference type="NCBIfam" id="NF001325">
    <property type="entry name" value="PRK00259.1-3"/>
    <property type="match status" value="1"/>
</dbReference>
<dbReference type="PANTHER" id="PTHR36917:SF1">
    <property type="entry name" value="INNER MEMBRANE-SPANNING PROTEIN YCIB"/>
    <property type="match status" value="1"/>
</dbReference>
<dbReference type="PANTHER" id="PTHR36917">
    <property type="entry name" value="INTRACELLULAR SEPTATION PROTEIN A-RELATED"/>
    <property type="match status" value="1"/>
</dbReference>
<dbReference type="Pfam" id="PF04279">
    <property type="entry name" value="IspA"/>
    <property type="match status" value="1"/>
</dbReference>
<protein>
    <recommendedName>
        <fullName evidence="1">Inner membrane-spanning protein YciB</fullName>
    </recommendedName>
</protein>
<evidence type="ECO:0000255" key="1">
    <source>
        <dbReference type="HAMAP-Rule" id="MF_00189"/>
    </source>
</evidence>